<protein>
    <recommendedName>
        <fullName>Long neurotoxin LNTX28</fullName>
    </recommendedName>
</protein>
<organism>
    <name type="scientific">Ophiophagus hannah</name>
    <name type="common">King cobra</name>
    <name type="synonym">Naja hannah</name>
    <dbReference type="NCBI Taxonomy" id="8665"/>
    <lineage>
        <taxon>Eukaryota</taxon>
        <taxon>Metazoa</taxon>
        <taxon>Chordata</taxon>
        <taxon>Craniata</taxon>
        <taxon>Vertebrata</taxon>
        <taxon>Euteleostomi</taxon>
        <taxon>Lepidosauria</taxon>
        <taxon>Squamata</taxon>
        <taxon>Bifurcata</taxon>
        <taxon>Unidentata</taxon>
        <taxon>Episquamata</taxon>
        <taxon>Toxicofera</taxon>
        <taxon>Serpentes</taxon>
        <taxon>Colubroidea</taxon>
        <taxon>Elapidae</taxon>
        <taxon>Elapinae</taxon>
        <taxon>Ophiophagus</taxon>
    </lineage>
</organism>
<proteinExistence type="evidence at protein level"/>
<accession>Q2VBP4</accession>
<keyword id="KW-0008">Acetylcholine receptor inhibiting toxin</keyword>
<keyword id="KW-1015">Disulfide bond</keyword>
<keyword id="KW-0872">Ion channel impairing toxin</keyword>
<keyword id="KW-0528">Neurotoxin</keyword>
<keyword id="KW-0629">Postsynaptic neurotoxin</keyword>
<keyword id="KW-0964">Secreted</keyword>
<keyword id="KW-0732">Signal</keyword>
<keyword id="KW-0800">Toxin</keyword>
<reference key="1">
    <citation type="journal article" date="2006" name="Biochem. J.">
        <title>Novel genes encoding six kinds of three-finger toxins in Ophiophagus hannah (king cobra) and function characterization of two recombinant long-chain neurotoxins.</title>
        <authorList>
            <person name="Li J."/>
            <person name="Zhang H."/>
            <person name="Liu J."/>
            <person name="Xu K."/>
        </authorList>
    </citation>
    <scope>NUCLEOTIDE SEQUENCE [MRNA]</scope>
    <source>
        <tissue>Venom gland</tissue>
    </source>
</reference>
<reference key="2">
    <citation type="journal article" date="2013" name="Proc. Natl. Acad. Sci. U.S.A.">
        <title>The king cobra genome reveals dynamic gene evolution and adaptation in the snake venom system.</title>
        <authorList>
            <person name="Vonk F.J."/>
            <person name="Casewell N.R."/>
            <person name="Henkel C.V."/>
            <person name="Heimberg A.M."/>
            <person name="Jansen H.J."/>
            <person name="McCleary R.J."/>
            <person name="Kerkkamp H.M."/>
            <person name="Vos R.A."/>
            <person name="Guerreiro I."/>
            <person name="Calvete J.J."/>
            <person name="Wuster W."/>
            <person name="Woods A.E."/>
            <person name="Logan J.M."/>
            <person name="Harrison R.A."/>
            <person name="Castoe T.A."/>
            <person name="de Koning A.P."/>
            <person name="Pollock D.D."/>
            <person name="Yandell M."/>
            <person name="Calderon D."/>
            <person name="Renjifo C."/>
            <person name="Currier R.B."/>
            <person name="Salgado D."/>
            <person name="Pla D."/>
            <person name="Sanz L."/>
            <person name="Hyder A.S."/>
            <person name="Ribeiro J.M."/>
            <person name="Arntzen J.W."/>
            <person name="van den Thillart G.E."/>
            <person name="Boetzer M."/>
            <person name="Pirovano W."/>
            <person name="Dirks R.P."/>
            <person name="Spaink H.P."/>
            <person name="Duboule D."/>
            <person name="McGlinn E."/>
            <person name="Kini R.M."/>
            <person name="Richardson M.K."/>
        </authorList>
    </citation>
    <scope>IDENTIFICATION BY MASS SPECTROMETRY</scope>
    <scope>SUBCELLULAR LOCATION</scope>
    <source>
        <tissue>Venom</tissue>
    </source>
</reference>
<evidence type="ECO:0000250" key="1"/>
<evidence type="ECO:0000250" key="2">
    <source>
        <dbReference type="UniProtKB" id="P60615"/>
    </source>
</evidence>
<evidence type="ECO:0000269" key="3">
    <source>
    </source>
</evidence>
<evidence type="ECO:0000305" key="4"/>
<feature type="signal peptide" evidence="1">
    <location>
        <begin position="1"/>
        <end position="21"/>
    </location>
</feature>
<feature type="chain" id="PRO_5000006481" description="Long neurotoxin LNTX28">
    <location>
        <begin position="22"/>
        <end position="91"/>
    </location>
</feature>
<feature type="disulfide bond" evidence="1">
    <location>
        <begin position="24"/>
        <end position="41"/>
    </location>
</feature>
<feature type="disulfide bond" evidence="1">
    <location>
        <begin position="34"/>
        <end position="62"/>
    </location>
</feature>
<feature type="disulfide bond" evidence="1">
    <location>
        <begin position="47"/>
        <end position="51"/>
    </location>
</feature>
<feature type="disulfide bond" evidence="1">
    <location>
        <begin position="66"/>
        <end position="77"/>
    </location>
</feature>
<feature type="disulfide bond" evidence="1">
    <location>
        <begin position="78"/>
        <end position="83"/>
    </location>
</feature>
<comment type="function">
    <text evidence="2">Binds with high affinity to muscular (alpha-1/CHRNA1) and neuronal (alpha-7/CHRNA7) nicotinic acetylcholine receptor (nAChR) and inhibits acetylcholine from binding to the receptor, thereby impairing neuromuscular and neuronal transmission.</text>
</comment>
<comment type="subcellular location">
    <subcellularLocation>
        <location evidence="3">Secreted</location>
    </subcellularLocation>
</comment>
<comment type="tissue specificity">
    <text evidence="4">Expressed by the venom gland.</text>
</comment>
<comment type="similarity">
    <text evidence="4">Belongs to the three-finger toxin family. Long-chain subfamily. Type II alpha-neurotoxin sub-subfamily.</text>
</comment>
<dbReference type="EMBL" id="DQ273571">
    <property type="protein sequence ID" value="ABB83625.1"/>
    <property type="molecule type" value="mRNA"/>
</dbReference>
<dbReference type="SMR" id="Q2VBP4"/>
<dbReference type="TopDownProteomics" id="Q2VBP4"/>
<dbReference type="GO" id="GO:0005576">
    <property type="term" value="C:extracellular region"/>
    <property type="evidence" value="ECO:0007669"/>
    <property type="project" value="UniProtKB-SubCell"/>
</dbReference>
<dbReference type="GO" id="GO:0030550">
    <property type="term" value="F:acetylcholine receptor inhibitor activity"/>
    <property type="evidence" value="ECO:0007669"/>
    <property type="project" value="UniProtKB-KW"/>
</dbReference>
<dbReference type="GO" id="GO:0099106">
    <property type="term" value="F:ion channel regulator activity"/>
    <property type="evidence" value="ECO:0007669"/>
    <property type="project" value="UniProtKB-KW"/>
</dbReference>
<dbReference type="GO" id="GO:0090729">
    <property type="term" value="F:toxin activity"/>
    <property type="evidence" value="ECO:0007669"/>
    <property type="project" value="UniProtKB-KW"/>
</dbReference>
<dbReference type="CDD" id="cd00206">
    <property type="entry name" value="TFP_snake_toxin"/>
    <property type="match status" value="1"/>
</dbReference>
<dbReference type="Gene3D" id="2.10.60.10">
    <property type="entry name" value="CD59"/>
    <property type="match status" value="1"/>
</dbReference>
<dbReference type="InterPro" id="IPR003571">
    <property type="entry name" value="Snake_3FTx"/>
</dbReference>
<dbReference type="InterPro" id="IPR045860">
    <property type="entry name" value="Snake_toxin-like_sf"/>
</dbReference>
<dbReference type="InterPro" id="IPR018354">
    <property type="entry name" value="Snake_toxin_con_site"/>
</dbReference>
<dbReference type="InterPro" id="IPR054131">
    <property type="entry name" value="Toxin_cobra-type"/>
</dbReference>
<dbReference type="Pfam" id="PF21947">
    <property type="entry name" value="Toxin_cobra-type"/>
    <property type="match status" value="1"/>
</dbReference>
<dbReference type="SUPFAM" id="SSF57302">
    <property type="entry name" value="Snake toxin-like"/>
    <property type="match status" value="1"/>
</dbReference>
<dbReference type="PROSITE" id="PS00272">
    <property type="entry name" value="SNAKE_TOXIN"/>
    <property type="match status" value="1"/>
</dbReference>
<name>3L228_OPHHA</name>
<sequence>MKTLLLTLVVMTIVCLDLGYTLICFISSHDSVTCAPGENVCFLKSWCDAWCGSRGKKLSFGCAATCPRVNPGIDIECCSTDNCNPHPKLRP</sequence>